<accession>Q12556</accession>
<sequence>MLPHPLAILSEEETNIARNVILAQHPNTVIDFREIYLSEPPKAQLLEFLALEHSGRLSPTSPRPPRLALCQYDVIGNDRIPSFEESVVDVGTRQRVQHRVVGKEHHASLTLSEFDTLVERCFASPLFQKALADFDLPEGFEVVIEPWPYGGLDYVEEKRRYFQGLCFATDKRKNNPDANFYSYPLPLIPVMDALTQEIIRVDRPATGGKGEGLTEQTFKRDIIGHCKDSDYVPELNPGGTRKDLKPLNVVQPEGPSFRITEESLVEWQKWRFRVAFNPREGATIHDVWYDGRSVLYRLSVSEMTVPYADPRPPFHRKQAFDFGDGGGGNMANNLSIGCDCLGVIKYFDAVMTGADGSAKKMPNAICLHEQDNGIGWKHSNWRTGRAVVTRHRELVVQFIITLANYEYIFAYKFDQSGGITVESRATGILNVVNIDAGKVSEYGNVVSGGVLAQNHQHIFCVRIDPAIDGPNNSVQVEESHPVPMNAVTNPNGNFYKVNTETMERAGFFDAAPELNRTVKMVNPHKKNPISQKPVGYKFIPLATQRLLADPNSIQARRAQFAQHHVWVTKYRDGELYAGGRYTLQSQEEIEGVSDAVKRGDSVVDTDVVVWSTFGITHNPRVEDWPVMPVEIFQLMIRPADFFTANPSLDVPSDKNISSRVVGNDCCRNAHI</sequence>
<keyword id="KW-0186">Copper</keyword>
<keyword id="KW-0903">Direct protein sequencing</keyword>
<keyword id="KW-1015">Disulfide bond</keyword>
<keyword id="KW-0325">Glycoprotein</keyword>
<keyword id="KW-0464">Manganese</keyword>
<keyword id="KW-0479">Metal-binding</keyword>
<keyword id="KW-0560">Oxidoreductase</keyword>
<keyword id="KW-0801">TPQ</keyword>
<proteinExistence type="evidence at protein level"/>
<reference key="1">
    <citation type="journal article" date="1996" name="Eur. J. Biochem.">
        <title>Two distinct quinoprotein amine oxidases are induced by n-butylamine in the mycelia of Aspergillus niger AKU 3302. Purification, characterization, cDNA cloning and sequencing.</title>
        <authorList>
            <person name="Frebort I."/>
            <person name="Tamaki H."/>
            <person name="Ishida H."/>
            <person name="Pec P."/>
            <person name="Luhova L."/>
            <person name="Tsuno H."/>
            <person name="Halata M."/>
            <person name="Asano Y."/>
            <person name="Kato Y."/>
            <person name="Matsushita K."/>
            <person name="Toyama H."/>
            <person name="Kumagai H."/>
            <person name="Adachi O."/>
        </authorList>
    </citation>
    <scope>NUCLEOTIDE SEQUENCE [MRNA]</scope>
    <scope>PROTEIN SEQUENCE OF 1-35; 538-565; 570-597 AND 635-654</scope>
    <source>
        <strain>AKU 3302 / M-62</strain>
    </source>
</reference>
<reference key="2">
    <citation type="submission" date="2000-09" db="EMBL/GenBank/DDBJ databases">
        <title>Reassessment of the active site and the primary structure of the amine oxidase AO-I from Aspergillus niger AKU 3302.</title>
        <authorList>
            <person name="Frebort I."/>
            <person name="Cernikova V."/>
            <person name="Hirota S."/>
            <person name="Yamada M."/>
            <person name="Adachi O."/>
            <person name="Pec P."/>
        </authorList>
    </citation>
    <scope>SEQUENCE REVISION</scope>
    <source>
        <strain>AKU 3302 / M-62</strain>
    </source>
</reference>
<gene>
    <name type="primary">AO-I</name>
</gene>
<protein>
    <recommendedName>
        <fullName>Copper amine oxidase 1</fullName>
        <ecNumber evidence="2">1.4.3.22</ecNumber>
    </recommendedName>
</protein>
<name>AMO1_ASPNG</name>
<organism>
    <name type="scientific">Aspergillus niger</name>
    <dbReference type="NCBI Taxonomy" id="5061"/>
    <lineage>
        <taxon>Eukaryota</taxon>
        <taxon>Fungi</taxon>
        <taxon>Dikarya</taxon>
        <taxon>Ascomycota</taxon>
        <taxon>Pezizomycotina</taxon>
        <taxon>Eurotiomycetes</taxon>
        <taxon>Eurotiomycetidae</taxon>
        <taxon>Eurotiales</taxon>
        <taxon>Aspergillaceae</taxon>
        <taxon>Aspergillus</taxon>
        <taxon>Aspergillus subgen. Circumdati</taxon>
    </lineage>
</organism>
<evidence type="ECO:0000250" key="1">
    <source>
        <dbReference type="UniProtKB" id="P12807"/>
    </source>
</evidence>
<evidence type="ECO:0000250" key="2">
    <source>
        <dbReference type="UniProtKB" id="P19801"/>
    </source>
</evidence>
<evidence type="ECO:0000250" key="3">
    <source>
        <dbReference type="UniProtKB" id="P46883"/>
    </source>
</evidence>
<evidence type="ECO:0000250" key="4">
    <source>
        <dbReference type="UniProtKB" id="Q43077"/>
    </source>
</evidence>
<evidence type="ECO:0000255" key="5">
    <source>
        <dbReference type="PROSITE-ProRule" id="PRU00498"/>
    </source>
</evidence>
<evidence type="ECO:0000305" key="6"/>
<feature type="chain" id="PRO_0000064110" description="Copper amine oxidase 1">
    <location>
        <begin position="1"/>
        <end position="671"/>
    </location>
</feature>
<feature type="region of interest" description="N2">
    <location>
        <begin position="3"/>
        <end position="106"/>
    </location>
</feature>
<feature type="region of interest" description="N3">
    <location>
        <begin position="107"/>
        <end position="211"/>
    </location>
</feature>
<feature type="active site" description="Proton acceptor" evidence="1">
    <location>
        <position position="321"/>
    </location>
</feature>
<feature type="active site" description="Schiff-base intermediate with substrate; via topaquinone" evidence="1">
    <location>
        <position position="405"/>
    </location>
</feature>
<feature type="binding site" evidence="1">
    <location>
        <begin position="319"/>
        <end position="330"/>
    </location>
    <ligand>
        <name>substrate</name>
    </ligand>
</feature>
<feature type="binding site" evidence="3">
    <location>
        <begin position="402"/>
        <end position="407"/>
    </location>
    <ligand>
        <name>substrate</name>
    </ligand>
</feature>
<feature type="binding site" evidence="1">
    <location>
        <position position="455"/>
    </location>
    <ligand>
        <name>Cu cation</name>
        <dbReference type="ChEBI" id="CHEBI:23378"/>
    </ligand>
</feature>
<feature type="binding site" evidence="1">
    <location>
        <position position="457"/>
    </location>
    <ligand>
        <name>Cu cation</name>
        <dbReference type="ChEBI" id="CHEBI:23378"/>
    </ligand>
</feature>
<feature type="binding site" evidence="4">
    <location>
        <position position="464"/>
    </location>
    <ligand>
        <name>Mn(2+)</name>
        <dbReference type="ChEBI" id="CHEBI:29035"/>
    </ligand>
</feature>
<feature type="binding site" evidence="4">
    <location>
        <position position="606"/>
    </location>
    <ligand>
        <name>Mn(2+)</name>
        <dbReference type="ChEBI" id="CHEBI:29035"/>
    </ligand>
</feature>
<feature type="binding site" evidence="1">
    <location>
        <position position="617"/>
    </location>
    <ligand>
        <name>Cu cation</name>
        <dbReference type="ChEBI" id="CHEBI:23378"/>
    </ligand>
</feature>
<feature type="modified residue" description="2',4',5'-topaquinone" evidence="1">
    <location>
        <position position="405"/>
    </location>
</feature>
<feature type="glycosylation site" description="N-linked (GlcNAc...) asparagine" evidence="5">
    <location>
        <position position="471"/>
    </location>
</feature>
<feature type="disulfide bond" evidence="1">
    <location>
        <begin position="340"/>
        <end position="366"/>
    </location>
</feature>
<comment type="catalytic activity">
    <reaction evidence="2">
        <text>histamine + O2 + H2O = imidazole-4-acetaldehyde + H2O2 + NH4(+)</text>
        <dbReference type="Rhea" id="RHEA:25625"/>
        <dbReference type="ChEBI" id="CHEBI:15377"/>
        <dbReference type="ChEBI" id="CHEBI:15379"/>
        <dbReference type="ChEBI" id="CHEBI:16240"/>
        <dbReference type="ChEBI" id="CHEBI:27398"/>
        <dbReference type="ChEBI" id="CHEBI:28938"/>
        <dbReference type="ChEBI" id="CHEBI:58432"/>
        <dbReference type="EC" id="1.4.3.22"/>
    </reaction>
</comment>
<comment type="cofactor">
    <cofactor evidence="3">
        <name>Cu cation</name>
        <dbReference type="ChEBI" id="CHEBI:23378"/>
    </cofactor>
    <cofactor evidence="1">
        <name>Zn(2+)</name>
        <dbReference type="ChEBI" id="CHEBI:29105"/>
    </cofactor>
    <text evidence="1 3">Binds 1 copper ion per subunit (By similarity). Can also use zinc ion as cofactor (By similarity).</text>
</comment>
<comment type="cofactor">
    <cofactor evidence="3">
        <name>L-topaquinone</name>
        <dbReference type="ChEBI" id="CHEBI:79027"/>
    </cofactor>
    <text evidence="3">Contains 1 topaquinone per subunit.</text>
</comment>
<comment type="cofactor">
    <cofactor evidence="4">
        <name>Mn(2+)</name>
        <dbReference type="ChEBI" id="CHEBI:29035"/>
    </cofactor>
    <text evidence="4">Binds 1 Mn(2+) ion per subunit.</text>
</comment>
<comment type="subunit">
    <text evidence="3">Homodimer.</text>
</comment>
<comment type="induction">
    <text>By N-butylamine.</text>
</comment>
<comment type="PTM">
    <text evidence="3">Topaquinone (TPQ) is generated by copper-dependent autoxidation of a specific tyrosyl residue.</text>
</comment>
<comment type="similarity">
    <text evidence="6">Belongs to the copper/topaquinone oxidase family.</text>
</comment>
<dbReference type="EC" id="1.4.3.22" evidence="2"/>
<dbReference type="EMBL" id="U31869">
    <property type="protein sequence ID" value="AAB03385.2"/>
    <property type="molecule type" value="mRNA"/>
</dbReference>
<dbReference type="PIR" id="S71320">
    <property type="entry name" value="S71320"/>
</dbReference>
<dbReference type="SMR" id="Q12556"/>
<dbReference type="GlyCosmos" id="Q12556">
    <property type="glycosylation" value="1 site, No reported glycans"/>
</dbReference>
<dbReference type="PaxDb" id="5061-CADANGAP00007551"/>
<dbReference type="VEuPathDB" id="FungiDB:An09g01550"/>
<dbReference type="VEuPathDB" id="FungiDB:ASPNIDRAFT2_1155673"/>
<dbReference type="VEuPathDB" id="FungiDB:ATCC64974_7100"/>
<dbReference type="VEuPathDB" id="FungiDB:M747DRAFT_371613"/>
<dbReference type="eggNOG" id="KOG1186">
    <property type="taxonomic scope" value="Eukaryota"/>
</dbReference>
<dbReference type="BRENDA" id="1.4.3.22">
    <property type="organism ID" value="518"/>
</dbReference>
<dbReference type="GO" id="GO:0005507">
    <property type="term" value="F:copper ion binding"/>
    <property type="evidence" value="ECO:0007669"/>
    <property type="project" value="InterPro"/>
</dbReference>
<dbReference type="GO" id="GO:0052598">
    <property type="term" value="F:histamine oxidase activity"/>
    <property type="evidence" value="ECO:0007669"/>
    <property type="project" value="RHEA"/>
</dbReference>
<dbReference type="GO" id="GO:0008131">
    <property type="term" value="F:primary methylamine oxidase activity"/>
    <property type="evidence" value="ECO:0007669"/>
    <property type="project" value="InterPro"/>
</dbReference>
<dbReference type="GO" id="GO:0048038">
    <property type="term" value="F:quinone binding"/>
    <property type="evidence" value="ECO:0007669"/>
    <property type="project" value="InterPro"/>
</dbReference>
<dbReference type="GO" id="GO:0009308">
    <property type="term" value="P:amine metabolic process"/>
    <property type="evidence" value="ECO:0007669"/>
    <property type="project" value="InterPro"/>
</dbReference>
<dbReference type="FunFam" id="2.70.98.20:FF:000001">
    <property type="entry name" value="Amine oxidase"/>
    <property type="match status" value="1"/>
</dbReference>
<dbReference type="FunFam" id="3.10.450.40:FF:000010">
    <property type="entry name" value="Amine oxidase"/>
    <property type="match status" value="1"/>
</dbReference>
<dbReference type="FunFam" id="3.10.450.40:FF:000015">
    <property type="entry name" value="Amine oxidase"/>
    <property type="match status" value="1"/>
</dbReference>
<dbReference type="Gene3D" id="3.10.450.40">
    <property type="match status" value="2"/>
</dbReference>
<dbReference type="Gene3D" id="2.70.98.20">
    <property type="entry name" value="Copper amine oxidase, catalytic domain"/>
    <property type="match status" value="1"/>
</dbReference>
<dbReference type="InterPro" id="IPR049948">
    <property type="entry name" value="Cu_Am_ox_TPQ-bd"/>
</dbReference>
<dbReference type="InterPro" id="IPR000269">
    <property type="entry name" value="Cu_amine_oxidase"/>
</dbReference>
<dbReference type="InterPro" id="IPR015798">
    <property type="entry name" value="Cu_amine_oxidase_C"/>
</dbReference>
<dbReference type="InterPro" id="IPR036460">
    <property type="entry name" value="Cu_amine_oxidase_C_sf"/>
</dbReference>
<dbReference type="InterPro" id="IPR016182">
    <property type="entry name" value="Cu_amine_oxidase_N-reg"/>
</dbReference>
<dbReference type="PANTHER" id="PTHR10638:SF91">
    <property type="entry name" value="AMINE OXIDASE"/>
    <property type="match status" value="1"/>
</dbReference>
<dbReference type="PANTHER" id="PTHR10638">
    <property type="entry name" value="COPPER AMINE OXIDASE"/>
    <property type="match status" value="1"/>
</dbReference>
<dbReference type="Pfam" id="PF01179">
    <property type="entry name" value="Cu_amine_oxid"/>
    <property type="match status" value="1"/>
</dbReference>
<dbReference type="SUPFAM" id="SSF49998">
    <property type="entry name" value="Amine oxidase catalytic domain"/>
    <property type="match status" value="1"/>
</dbReference>
<dbReference type="SUPFAM" id="SSF54416">
    <property type="entry name" value="Amine oxidase N-terminal region"/>
    <property type="match status" value="2"/>
</dbReference>
<dbReference type="PROSITE" id="PS01164">
    <property type="entry name" value="COPPER_AMINE_OXID_1"/>
    <property type="match status" value="1"/>
</dbReference>